<accession>C3M9J7</accession>
<dbReference type="EMBL" id="CP001389">
    <property type="protein sequence ID" value="ACP24763.1"/>
    <property type="molecule type" value="Genomic_DNA"/>
</dbReference>
<dbReference type="RefSeq" id="WP_012707547.1">
    <property type="nucleotide sequence ID" value="NC_012587.1"/>
</dbReference>
<dbReference type="RefSeq" id="YP_002825516.1">
    <property type="nucleotide sequence ID" value="NC_012587.1"/>
</dbReference>
<dbReference type="SMR" id="C3M9J7"/>
<dbReference type="STRING" id="394.NGR_c09730"/>
<dbReference type="KEGG" id="rhi:NGR_c09730"/>
<dbReference type="PATRIC" id="fig|394.7.peg.3794"/>
<dbReference type="eggNOG" id="COG0776">
    <property type="taxonomic scope" value="Bacteria"/>
</dbReference>
<dbReference type="HOGENOM" id="CLU_105066_1_1_5"/>
<dbReference type="OrthoDB" id="9797747at2"/>
<dbReference type="Proteomes" id="UP000001054">
    <property type="component" value="Chromosome"/>
</dbReference>
<dbReference type="GO" id="GO:0005829">
    <property type="term" value="C:cytosol"/>
    <property type="evidence" value="ECO:0007669"/>
    <property type="project" value="TreeGrafter"/>
</dbReference>
<dbReference type="GO" id="GO:0003677">
    <property type="term" value="F:DNA binding"/>
    <property type="evidence" value="ECO:0007669"/>
    <property type="project" value="UniProtKB-UniRule"/>
</dbReference>
<dbReference type="GO" id="GO:0030527">
    <property type="term" value="F:structural constituent of chromatin"/>
    <property type="evidence" value="ECO:0007669"/>
    <property type="project" value="InterPro"/>
</dbReference>
<dbReference type="GO" id="GO:0006310">
    <property type="term" value="P:DNA recombination"/>
    <property type="evidence" value="ECO:0007669"/>
    <property type="project" value="UniProtKB-UniRule"/>
</dbReference>
<dbReference type="GO" id="GO:0009893">
    <property type="term" value="P:positive regulation of metabolic process"/>
    <property type="evidence" value="ECO:0007669"/>
    <property type="project" value="UniProtKB-ARBA"/>
</dbReference>
<dbReference type="GO" id="GO:0006355">
    <property type="term" value="P:regulation of DNA-templated transcription"/>
    <property type="evidence" value="ECO:0007669"/>
    <property type="project" value="UniProtKB-UniRule"/>
</dbReference>
<dbReference type="GO" id="GO:0006417">
    <property type="term" value="P:regulation of translation"/>
    <property type="evidence" value="ECO:0007669"/>
    <property type="project" value="UniProtKB-UniRule"/>
</dbReference>
<dbReference type="CDD" id="cd13835">
    <property type="entry name" value="IHF_A"/>
    <property type="match status" value="1"/>
</dbReference>
<dbReference type="Gene3D" id="4.10.520.10">
    <property type="entry name" value="IHF-like DNA-binding proteins"/>
    <property type="match status" value="1"/>
</dbReference>
<dbReference type="HAMAP" id="MF_00380">
    <property type="entry name" value="IHF_alpha"/>
    <property type="match status" value="1"/>
</dbReference>
<dbReference type="InterPro" id="IPR000119">
    <property type="entry name" value="Hist_DNA-bd"/>
</dbReference>
<dbReference type="InterPro" id="IPR020816">
    <property type="entry name" value="Histone-like_DNA-bd_CS"/>
</dbReference>
<dbReference type="InterPro" id="IPR010992">
    <property type="entry name" value="IHF-like_DNA-bd_dom_sf"/>
</dbReference>
<dbReference type="InterPro" id="IPR005684">
    <property type="entry name" value="IHF_alpha"/>
</dbReference>
<dbReference type="NCBIfam" id="TIGR00987">
    <property type="entry name" value="himA"/>
    <property type="match status" value="1"/>
</dbReference>
<dbReference type="NCBIfam" id="NF001401">
    <property type="entry name" value="PRK00285.1"/>
    <property type="match status" value="1"/>
</dbReference>
<dbReference type="PANTHER" id="PTHR33175">
    <property type="entry name" value="DNA-BINDING PROTEIN HU"/>
    <property type="match status" value="1"/>
</dbReference>
<dbReference type="PANTHER" id="PTHR33175:SF2">
    <property type="entry name" value="INTEGRATION HOST FACTOR SUBUNIT ALPHA"/>
    <property type="match status" value="1"/>
</dbReference>
<dbReference type="Pfam" id="PF00216">
    <property type="entry name" value="Bac_DNA_binding"/>
    <property type="match status" value="1"/>
</dbReference>
<dbReference type="PRINTS" id="PR01727">
    <property type="entry name" value="DNABINDINGHU"/>
</dbReference>
<dbReference type="SMART" id="SM00411">
    <property type="entry name" value="BHL"/>
    <property type="match status" value="1"/>
</dbReference>
<dbReference type="SUPFAM" id="SSF47729">
    <property type="entry name" value="IHF-like DNA-binding proteins"/>
    <property type="match status" value="1"/>
</dbReference>
<dbReference type="PROSITE" id="PS00045">
    <property type="entry name" value="HISTONE_LIKE"/>
    <property type="match status" value="1"/>
</dbReference>
<feature type="chain" id="PRO_1000190427" description="Integration host factor subunit alpha">
    <location>
        <begin position="1"/>
        <end position="112"/>
    </location>
</feature>
<gene>
    <name evidence="1" type="primary">ihfA</name>
    <name evidence="1" type="synonym">himA</name>
    <name type="ordered locus">NGR_c09730</name>
</gene>
<keyword id="KW-0233">DNA recombination</keyword>
<keyword id="KW-0238">DNA-binding</keyword>
<keyword id="KW-1185">Reference proteome</keyword>
<keyword id="KW-0804">Transcription</keyword>
<keyword id="KW-0805">Transcription regulation</keyword>
<keyword id="KW-0810">Translation regulation</keyword>
<organism>
    <name type="scientific">Sinorhizobium fredii (strain NBRC 101917 / NGR234)</name>
    <dbReference type="NCBI Taxonomy" id="394"/>
    <lineage>
        <taxon>Bacteria</taxon>
        <taxon>Pseudomonadati</taxon>
        <taxon>Pseudomonadota</taxon>
        <taxon>Alphaproteobacteria</taxon>
        <taxon>Hyphomicrobiales</taxon>
        <taxon>Rhizobiaceae</taxon>
        <taxon>Sinorhizobium/Ensifer group</taxon>
        <taxon>Sinorhizobium</taxon>
    </lineage>
</organism>
<name>IHFA_SINFN</name>
<proteinExistence type="inferred from homology"/>
<reference key="1">
    <citation type="journal article" date="2009" name="Appl. Environ. Microbiol.">
        <title>Rhizobium sp. strain NGR234 possesses a remarkable number of secretion systems.</title>
        <authorList>
            <person name="Schmeisser C."/>
            <person name="Liesegang H."/>
            <person name="Krysciak D."/>
            <person name="Bakkou N."/>
            <person name="Le Quere A."/>
            <person name="Wollherr A."/>
            <person name="Heinemeyer I."/>
            <person name="Morgenstern B."/>
            <person name="Pommerening-Roeser A."/>
            <person name="Flores M."/>
            <person name="Palacios R."/>
            <person name="Brenner S."/>
            <person name="Gottschalk G."/>
            <person name="Schmitz R.A."/>
            <person name="Broughton W.J."/>
            <person name="Perret X."/>
            <person name="Strittmatter A.W."/>
            <person name="Streit W.R."/>
        </authorList>
    </citation>
    <scope>NUCLEOTIDE SEQUENCE [LARGE SCALE GENOMIC DNA]</scope>
    <source>
        <strain>NBRC 101917 / NGR234</strain>
    </source>
</reference>
<protein>
    <recommendedName>
        <fullName evidence="1">Integration host factor subunit alpha</fullName>
        <shortName evidence="1">IHF-alpha</shortName>
    </recommendedName>
</protein>
<sequence length="112" mass="12430">MSGKTVTRADLAESVFRKVGLSRTESAELVETVIDEICNAIVRGESVKLSSFATFQVRDKNERIGRNPKTGEEVPISPRRVMTFKASNVLKQRVLKAHLSRRAKQKQTGTAS</sequence>
<evidence type="ECO:0000255" key="1">
    <source>
        <dbReference type="HAMAP-Rule" id="MF_00380"/>
    </source>
</evidence>
<comment type="function">
    <text evidence="1">This protein is one of the two subunits of integration host factor, a specific DNA-binding protein that functions in genetic recombination as well as in transcriptional and translational control.</text>
</comment>
<comment type="subunit">
    <text evidence="1">Heterodimer of an alpha and a beta chain.</text>
</comment>
<comment type="similarity">
    <text evidence="1">Belongs to the bacterial histone-like protein family.</text>
</comment>